<dbReference type="EMBL" id="Y14561">
    <property type="protein sequence ID" value="CAA74893.1"/>
    <property type="molecule type" value="mRNA"/>
</dbReference>
<dbReference type="EMBL" id="AY083613">
    <property type="protein sequence ID" value="AAM01198.1"/>
    <property type="molecule type" value="Genomic_DNA"/>
</dbReference>
<dbReference type="PIR" id="T06821">
    <property type="entry name" value="T06821"/>
</dbReference>
<dbReference type="GO" id="GO:0009507">
    <property type="term" value="C:chloroplast"/>
    <property type="evidence" value="ECO:0000314"/>
    <property type="project" value="UniProtKB"/>
</dbReference>
<dbReference type="GO" id="GO:0005739">
    <property type="term" value="C:mitochondrion"/>
    <property type="evidence" value="ECO:0007669"/>
    <property type="project" value="TreeGrafter"/>
</dbReference>
<dbReference type="GO" id="GO:0005525">
    <property type="term" value="F:GTP binding"/>
    <property type="evidence" value="ECO:0007669"/>
    <property type="project" value="UniProtKB-KW"/>
</dbReference>
<dbReference type="GO" id="GO:0003924">
    <property type="term" value="F:GTPase activity"/>
    <property type="evidence" value="ECO:0007669"/>
    <property type="project" value="InterPro"/>
</dbReference>
<dbReference type="GO" id="GO:0003746">
    <property type="term" value="F:translation elongation factor activity"/>
    <property type="evidence" value="ECO:0000304"/>
    <property type="project" value="UniProtKB"/>
</dbReference>
<dbReference type="GO" id="GO:0070125">
    <property type="term" value="P:mitochondrial translational elongation"/>
    <property type="evidence" value="ECO:0007669"/>
    <property type="project" value="TreeGrafter"/>
</dbReference>
<dbReference type="GO" id="GO:0006414">
    <property type="term" value="P:translational elongation"/>
    <property type="evidence" value="ECO:0000304"/>
    <property type="project" value="UniProtKB"/>
</dbReference>
<dbReference type="CDD" id="cd01884">
    <property type="entry name" value="EF_Tu"/>
    <property type="match status" value="1"/>
</dbReference>
<dbReference type="CDD" id="cd03697">
    <property type="entry name" value="EFTU_II"/>
    <property type="match status" value="1"/>
</dbReference>
<dbReference type="CDD" id="cd03707">
    <property type="entry name" value="EFTU_III"/>
    <property type="match status" value="1"/>
</dbReference>
<dbReference type="FunFam" id="2.40.30.10:FF:000001">
    <property type="entry name" value="Elongation factor Tu"/>
    <property type="match status" value="1"/>
</dbReference>
<dbReference type="FunFam" id="2.40.30.10:FF:000046">
    <property type="entry name" value="Elongation factor Tu"/>
    <property type="match status" value="1"/>
</dbReference>
<dbReference type="FunFam" id="3.40.50.300:FF:000003">
    <property type="entry name" value="Elongation factor Tu"/>
    <property type="match status" value="1"/>
</dbReference>
<dbReference type="Gene3D" id="3.40.50.300">
    <property type="entry name" value="P-loop containing nucleotide triphosphate hydrolases"/>
    <property type="match status" value="1"/>
</dbReference>
<dbReference type="Gene3D" id="2.40.30.10">
    <property type="entry name" value="Translation factors"/>
    <property type="match status" value="2"/>
</dbReference>
<dbReference type="HAMAP" id="MF_00118_B">
    <property type="entry name" value="EF_Tu_B"/>
    <property type="match status" value="1"/>
</dbReference>
<dbReference type="InterPro" id="IPR041709">
    <property type="entry name" value="EF-Tu_GTP-bd"/>
</dbReference>
<dbReference type="InterPro" id="IPR050055">
    <property type="entry name" value="EF-Tu_GTPase"/>
</dbReference>
<dbReference type="InterPro" id="IPR004161">
    <property type="entry name" value="EFTu-like_2"/>
</dbReference>
<dbReference type="InterPro" id="IPR033720">
    <property type="entry name" value="EFTU_2"/>
</dbReference>
<dbReference type="InterPro" id="IPR031157">
    <property type="entry name" value="G_TR_CS"/>
</dbReference>
<dbReference type="InterPro" id="IPR027417">
    <property type="entry name" value="P-loop_NTPase"/>
</dbReference>
<dbReference type="InterPro" id="IPR005225">
    <property type="entry name" value="Small_GTP-bd"/>
</dbReference>
<dbReference type="InterPro" id="IPR000795">
    <property type="entry name" value="T_Tr_GTP-bd_dom"/>
</dbReference>
<dbReference type="InterPro" id="IPR009000">
    <property type="entry name" value="Transl_B-barrel_sf"/>
</dbReference>
<dbReference type="InterPro" id="IPR009001">
    <property type="entry name" value="Transl_elong_EF1A/Init_IF2_C"/>
</dbReference>
<dbReference type="InterPro" id="IPR004541">
    <property type="entry name" value="Transl_elong_EFTu/EF1A_bac/org"/>
</dbReference>
<dbReference type="InterPro" id="IPR004160">
    <property type="entry name" value="Transl_elong_EFTu/EF1A_C"/>
</dbReference>
<dbReference type="NCBIfam" id="TIGR00485">
    <property type="entry name" value="EF-Tu"/>
    <property type="match status" value="1"/>
</dbReference>
<dbReference type="NCBIfam" id="NF000766">
    <property type="entry name" value="PRK00049.1"/>
    <property type="match status" value="1"/>
</dbReference>
<dbReference type="NCBIfam" id="NF009372">
    <property type="entry name" value="PRK12735.1"/>
    <property type="match status" value="1"/>
</dbReference>
<dbReference type="NCBIfam" id="NF009373">
    <property type="entry name" value="PRK12736.1"/>
    <property type="match status" value="1"/>
</dbReference>
<dbReference type="NCBIfam" id="TIGR00231">
    <property type="entry name" value="small_GTP"/>
    <property type="match status" value="1"/>
</dbReference>
<dbReference type="PANTHER" id="PTHR43721:SF5">
    <property type="entry name" value="ELONGATION FACTOR TU, CHLOROPLASTIC"/>
    <property type="match status" value="1"/>
</dbReference>
<dbReference type="PANTHER" id="PTHR43721">
    <property type="entry name" value="ELONGATION FACTOR TU-RELATED"/>
    <property type="match status" value="1"/>
</dbReference>
<dbReference type="Pfam" id="PF00009">
    <property type="entry name" value="GTP_EFTU"/>
    <property type="match status" value="1"/>
</dbReference>
<dbReference type="Pfam" id="PF03144">
    <property type="entry name" value="GTP_EFTU_D2"/>
    <property type="match status" value="1"/>
</dbReference>
<dbReference type="Pfam" id="PF03143">
    <property type="entry name" value="GTP_EFTU_D3"/>
    <property type="match status" value="1"/>
</dbReference>
<dbReference type="PRINTS" id="PR00315">
    <property type="entry name" value="ELONGATNFCT"/>
</dbReference>
<dbReference type="SUPFAM" id="SSF50465">
    <property type="entry name" value="EF-Tu/eEF-1alpha/eIF2-gamma C-terminal domain"/>
    <property type="match status" value="1"/>
</dbReference>
<dbReference type="SUPFAM" id="SSF52540">
    <property type="entry name" value="P-loop containing nucleoside triphosphate hydrolases"/>
    <property type="match status" value="1"/>
</dbReference>
<dbReference type="SUPFAM" id="SSF50447">
    <property type="entry name" value="Translation proteins"/>
    <property type="match status" value="1"/>
</dbReference>
<dbReference type="PROSITE" id="PS00301">
    <property type="entry name" value="G_TR_1"/>
    <property type="match status" value="1"/>
</dbReference>
<dbReference type="PROSITE" id="PS51722">
    <property type="entry name" value="G_TR_2"/>
    <property type="match status" value="1"/>
</dbReference>
<organism>
    <name type="scientific">Pisum sativum</name>
    <name type="common">Garden pea</name>
    <name type="synonym">Lathyrus oleraceus</name>
    <dbReference type="NCBI Taxonomy" id="3888"/>
    <lineage>
        <taxon>Eukaryota</taxon>
        <taxon>Viridiplantae</taxon>
        <taxon>Streptophyta</taxon>
        <taxon>Embryophyta</taxon>
        <taxon>Tracheophyta</taxon>
        <taxon>Spermatophyta</taxon>
        <taxon>Magnoliopsida</taxon>
        <taxon>eudicotyledons</taxon>
        <taxon>Gunneridae</taxon>
        <taxon>Pentapetalae</taxon>
        <taxon>rosids</taxon>
        <taxon>fabids</taxon>
        <taxon>Fabales</taxon>
        <taxon>Fabaceae</taxon>
        <taxon>Papilionoideae</taxon>
        <taxon>50 kb inversion clade</taxon>
        <taxon>NPAAA clade</taxon>
        <taxon>Hologalegina</taxon>
        <taxon>IRL clade</taxon>
        <taxon>Fabeae</taxon>
        <taxon>Pisum</taxon>
    </lineage>
</organism>
<comment type="function">
    <text>This protein promotes the GTP-dependent binding of aminoacyl-tRNA to the A-site of ribosomes during protein biosynthesis.</text>
</comment>
<comment type="subcellular location">
    <subcellularLocation>
        <location evidence="4">Plastid</location>
        <location evidence="4">Chloroplast</location>
    </subcellularLocation>
</comment>
<comment type="tissue specificity">
    <text evidence="4">Higher expression in leaves than in roots.</text>
</comment>
<comment type="induction">
    <text evidence="4">Induced by light, low temperature and salicylic acid (SA). Repressed by high salt and abscisic acid (ABA).</text>
</comment>
<comment type="similarity">
    <text evidence="5">Belongs to the TRAFAC class translation factor GTPase superfamily. Classic translation factor GTPase family. EF-Tu/EF-1A subfamily.</text>
</comment>
<feature type="transit peptide" description="Chloroplast" evidence="2">
    <location>
        <begin position="1"/>
        <end position="79"/>
    </location>
</feature>
<feature type="chain" id="PRO_0000007457" description="Elongation factor Tu, chloroplastic">
    <location>
        <begin position="80"/>
        <end position="488"/>
    </location>
</feature>
<feature type="domain" description="tr-type G">
    <location>
        <begin position="89"/>
        <end position="293"/>
    </location>
</feature>
<feature type="region of interest" description="Disordered" evidence="3">
    <location>
        <begin position="1"/>
        <end position="20"/>
    </location>
</feature>
<feature type="region of interest" description="G1" evidence="1">
    <location>
        <begin position="98"/>
        <end position="105"/>
    </location>
</feature>
<feature type="region of interest" description="G2" evidence="1">
    <location>
        <begin position="139"/>
        <end position="143"/>
    </location>
</feature>
<feature type="region of interest" description="G3" evidence="1">
    <location>
        <begin position="160"/>
        <end position="163"/>
    </location>
</feature>
<feature type="region of interest" description="G4" evidence="1">
    <location>
        <begin position="215"/>
        <end position="218"/>
    </location>
</feature>
<feature type="region of interest" description="G5" evidence="1">
    <location>
        <begin position="253"/>
        <end position="255"/>
    </location>
</feature>
<feature type="binding site" evidence="1">
    <location>
        <begin position="98"/>
        <end position="105"/>
    </location>
    <ligand>
        <name>GTP</name>
        <dbReference type="ChEBI" id="CHEBI:37565"/>
    </ligand>
</feature>
<feature type="binding site" evidence="1">
    <location>
        <begin position="160"/>
        <end position="164"/>
    </location>
    <ligand>
        <name>GTP</name>
        <dbReference type="ChEBI" id="CHEBI:37565"/>
    </ligand>
</feature>
<feature type="binding site" evidence="1">
    <location>
        <begin position="215"/>
        <end position="218"/>
    </location>
    <ligand>
        <name>GTP</name>
        <dbReference type="ChEBI" id="CHEBI:37565"/>
    </ligand>
</feature>
<gene>
    <name type="primary">tufA</name>
</gene>
<evidence type="ECO:0000250" key="1"/>
<evidence type="ECO:0000255" key="2"/>
<evidence type="ECO:0000256" key="3">
    <source>
        <dbReference type="SAM" id="MobiDB-lite"/>
    </source>
</evidence>
<evidence type="ECO:0000269" key="4">
    <source>
    </source>
</evidence>
<evidence type="ECO:0000305" key="5"/>
<accession>O24310</accession>
<sequence>MALSSTAATTSSKLKLSNPPSLSHTFTASASASVSNSTSFRPKLTLTRLSSSFLNPSTILHLTPSQRTNRPSSSPFTVRAARGKFERKKPHLNIGTIGHVDHGKTTLTAALTMALACLGNSAPKKYDEIDAAPEERARGITINTATVEYETETRHYAHVDCPGHADYVKNMITGAAQMDGAILVVSGADGPMPQTKEHILLAKQVGVPSVVVFLNKQDQVDDEELLELVELEVRELLSSYEFPGDDIPIVSGSALLALEALMANPTLKRGNNQWVDKIYQLMDEVDKYIPIPQRQTELPFLLAIEDVFSITXRGTVATGRIERGLVKVGDVVDLVGLRETRNTTVTGVEMFQKILDDAMAGDNVGLLLRGIQKIDIQRGMVLAKPGTITPHSKFSAIVYVLKKEEGGRHSPFFAGYRPQFYMRTTDVTGKVTSIMNDKDEESKMVMPGDRVKIVVELIVPVAIEQGMRFAIREGGKTVGAGVIGAIIE</sequence>
<proteinExistence type="evidence at transcript level"/>
<protein>
    <recommendedName>
        <fullName>Elongation factor Tu, chloroplastic</fullName>
        <shortName>EF-Tu</shortName>
    </recommendedName>
</protein>
<name>EFTU_PEA</name>
<keyword id="KW-0150">Chloroplast</keyword>
<keyword id="KW-0251">Elongation factor</keyword>
<keyword id="KW-0342">GTP-binding</keyword>
<keyword id="KW-0547">Nucleotide-binding</keyword>
<keyword id="KW-0934">Plastid</keyword>
<keyword id="KW-0648">Protein biosynthesis</keyword>
<keyword id="KW-0809">Transit peptide</keyword>
<reference key="1">
    <citation type="submission" date="1997-08" db="EMBL/GenBank/DDBJ databases">
        <authorList>
            <person name="Reddy M.K."/>
            <person name="Nair S."/>
            <person name="Tewari K.K."/>
        </authorList>
    </citation>
    <scope>NUCLEOTIDE SEQUENCE</scope>
    <source>
        <tissue>Leaf</tissue>
    </source>
</reference>
<reference key="2">
    <citation type="journal article" date="2004" name="Biochem. Biophys. Res. Commun.">
        <title>A pea chloroplast translation elongation factor that is regulated by abiotic factors.</title>
        <authorList>
            <person name="Singh B.N."/>
            <person name="Mishra R.N."/>
            <person name="Agarwal P.K."/>
            <person name="Goswami M."/>
            <person name="Nair S."/>
            <person name="Sopory S.K."/>
            <person name="Reddy M.K."/>
        </authorList>
    </citation>
    <scope>NUCLEOTIDE SEQUENCE [GENOMIC DNA / MRNA]</scope>
    <scope>SUBCELLULAR LOCATION</scope>
    <scope>TISSUE SPECIFICITY</scope>
    <scope>INDUCTION</scope>
</reference>